<dbReference type="EC" id="6.3.5.2" evidence="1"/>
<dbReference type="EMBL" id="AM933172">
    <property type="protein sequence ID" value="CAR34073.1"/>
    <property type="molecule type" value="Genomic_DNA"/>
</dbReference>
<dbReference type="RefSeq" id="WP_000138293.1">
    <property type="nucleotide sequence ID" value="NC_011294.1"/>
</dbReference>
<dbReference type="SMR" id="B5R569"/>
<dbReference type="KEGG" id="set:SEN2490"/>
<dbReference type="HOGENOM" id="CLU_014340_0_5_6"/>
<dbReference type="UniPathway" id="UPA00189">
    <property type="reaction ID" value="UER00296"/>
</dbReference>
<dbReference type="Proteomes" id="UP000000613">
    <property type="component" value="Chromosome"/>
</dbReference>
<dbReference type="GO" id="GO:0005829">
    <property type="term" value="C:cytosol"/>
    <property type="evidence" value="ECO:0007669"/>
    <property type="project" value="TreeGrafter"/>
</dbReference>
<dbReference type="GO" id="GO:0005524">
    <property type="term" value="F:ATP binding"/>
    <property type="evidence" value="ECO:0007669"/>
    <property type="project" value="UniProtKB-UniRule"/>
</dbReference>
<dbReference type="GO" id="GO:0003921">
    <property type="term" value="F:GMP synthase activity"/>
    <property type="evidence" value="ECO:0007669"/>
    <property type="project" value="InterPro"/>
</dbReference>
<dbReference type="CDD" id="cd01742">
    <property type="entry name" value="GATase1_GMP_Synthase"/>
    <property type="match status" value="1"/>
</dbReference>
<dbReference type="CDD" id="cd01997">
    <property type="entry name" value="GMP_synthase_C"/>
    <property type="match status" value="1"/>
</dbReference>
<dbReference type="FunFam" id="3.30.300.10:FF:000002">
    <property type="entry name" value="GMP synthase [glutamine-hydrolyzing]"/>
    <property type="match status" value="1"/>
</dbReference>
<dbReference type="FunFam" id="3.40.50.620:FF:000001">
    <property type="entry name" value="GMP synthase [glutamine-hydrolyzing]"/>
    <property type="match status" value="1"/>
</dbReference>
<dbReference type="FunFam" id="3.40.50.880:FF:000001">
    <property type="entry name" value="GMP synthase [glutamine-hydrolyzing]"/>
    <property type="match status" value="1"/>
</dbReference>
<dbReference type="Gene3D" id="3.30.300.10">
    <property type="match status" value="1"/>
</dbReference>
<dbReference type="Gene3D" id="3.40.50.880">
    <property type="match status" value="1"/>
</dbReference>
<dbReference type="Gene3D" id="3.40.50.620">
    <property type="entry name" value="HUPs"/>
    <property type="match status" value="1"/>
</dbReference>
<dbReference type="HAMAP" id="MF_00344">
    <property type="entry name" value="GMP_synthase"/>
    <property type="match status" value="1"/>
</dbReference>
<dbReference type="InterPro" id="IPR029062">
    <property type="entry name" value="Class_I_gatase-like"/>
</dbReference>
<dbReference type="InterPro" id="IPR017926">
    <property type="entry name" value="GATASE"/>
</dbReference>
<dbReference type="InterPro" id="IPR001674">
    <property type="entry name" value="GMP_synth_C"/>
</dbReference>
<dbReference type="InterPro" id="IPR004739">
    <property type="entry name" value="GMP_synth_GATase"/>
</dbReference>
<dbReference type="InterPro" id="IPR022955">
    <property type="entry name" value="GMP_synthase"/>
</dbReference>
<dbReference type="InterPro" id="IPR025777">
    <property type="entry name" value="GMPS_ATP_PPase_dom"/>
</dbReference>
<dbReference type="InterPro" id="IPR022310">
    <property type="entry name" value="NAD/GMP_synthase"/>
</dbReference>
<dbReference type="InterPro" id="IPR014729">
    <property type="entry name" value="Rossmann-like_a/b/a_fold"/>
</dbReference>
<dbReference type="NCBIfam" id="TIGR00884">
    <property type="entry name" value="guaA_Cterm"/>
    <property type="match status" value="1"/>
</dbReference>
<dbReference type="NCBIfam" id="TIGR00888">
    <property type="entry name" value="guaA_Nterm"/>
    <property type="match status" value="1"/>
</dbReference>
<dbReference type="NCBIfam" id="NF000848">
    <property type="entry name" value="PRK00074.1"/>
    <property type="match status" value="1"/>
</dbReference>
<dbReference type="PANTHER" id="PTHR11922:SF2">
    <property type="entry name" value="GMP SYNTHASE [GLUTAMINE-HYDROLYZING]"/>
    <property type="match status" value="1"/>
</dbReference>
<dbReference type="PANTHER" id="PTHR11922">
    <property type="entry name" value="GMP SYNTHASE-RELATED"/>
    <property type="match status" value="1"/>
</dbReference>
<dbReference type="Pfam" id="PF00117">
    <property type="entry name" value="GATase"/>
    <property type="match status" value="1"/>
</dbReference>
<dbReference type="Pfam" id="PF00958">
    <property type="entry name" value="GMP_synt_C"/>
    <property type="match status" value="1"/>
</dbReference>
<dbReference type="Pfam" id="PF02540">
    <property type="entry name" value="NAD_synthase"/>
    <property type="match status" value="1"/>
</dbReference>
<dbReference type="PRINTS" id="PR00097">
    <property type="entry name" value="ANTSNTHASEII"/>
</dbReference>
<dbReference type="PRINTS" id="PR00099">
    <property type="entry name" value="CPSGATASE"/>
</dbReference>
<dbReference type="PRINTS" id="PR00096">
    <property type="entry name" value="GATASE"/>
</dbReference>
<dbReference type="SUPFAM" id="SSF52402">
    <property type="entry name" value="Adenine nucleotide alpha hydrolases-like"/>
    <property type="match status" value="1"/>
</dbReference>
<dbReference type="SUPFAM" id="SSF52317">
    <property type="entry name" value="Class I glutamine amidotransferase-like"/>
    <property type="match status" value="1"/>
</dbReference>
<dbReference type="SUPFAM" id="SSF54810">
    <property type="entry name" value="GMP synthetase C-terminal dimerisation domain"/>
    <property type="match status" value="1"/>
</dbReference>
<dbReference type="PROSITE" id="PS51273">
    <property type="entry name" value="GATASE_TYPE_1"/>
    <property type="match status" value="1"/>
</dbReference>
<dbReference type="PROSITE" id="PS51553">
    <property type="entry name" value="GMPS_ATP_PPASE"/>
    <property type="match status" value="1"/>
</dbReference>
<name>GUAA_SALEP</name>
<protein>
    <recommendedName>
        <fullName evidence="1">GMP synthase [glutamine-hydrolyzing]</fullName>
        <ecNumber evidence="1">6.3.5.2</ecNumber>
    </recommendedName>
    <alternativeName>
        <fullName evidence="1">GMP synthetase</fullName>
    </alternativeName>
    <alternativeName>
        <fullName evidence="1">Glutamine amidotransferase</fullName>
    </alternativeName>
</protein>
<feature type="chain" id="PRO_1000120389" description="GMP synthase [glutamine-hydrolyzing]">
    <location>
        <begin position="1"/>
        <end position="525"/>
    </location>
</feature>
<feature type="domain" description="Glutamine amidotransferase type-1" evidence="1">
    <location>
        <begin position="9"/>
        <end position="207"/>
    </location>
</feature>
<feature type="domain" description="GMPS ATP-PPase" evidence="1">
    <location>
        <begin position="208"/>
        <end position="400"/>
    </location>
</feature>
<feature type="active site" description="Nucleophile" evidence="1">
    <location>
        <position position="86"/>
    </location>
</feature>
<feature type="active site" evidence="1">
    <location>
        <position position="181"/>
    </location>
</feature>
<feature type="active site" evidence="1">
    <location>
        <position position="183"/>
    </location>
</feature>
<feature type="binding site" evidence="1">
    <location>
        <begin position="235"/>
        <end position="241"/>
    </location>
    <ligand>
        <name>ATP</name>
        <dbReference type="ChEBI" id="CHEBI:30616"/>
    </ligand>
</feature>
<organism>
    <name type="scientific">Salmonella enteritidis PT4 (strain P125109)</name>
    <dbReference type="NCBI Taxonomy" id="550537"/>
    <lineage>
        <taxon>Bacteria</taxon>
        <taxon>Pseudomonadati</taxon>
        <taxon>Pseudomonadota</taxon>
        <taxon>Gammaproteobacteria</taxon>
        <taxon>Enterobacterales</taxon>
        <taxon>Enterobacteriaceae</taxon>
        <taxon>Salmonella</taxon>
    </lineage>
</organism>
<accession>B5R569</accession>
<keyword id="KW-0067">ATP-binding</keyword>
<keyword id="KW-0315">Glutamine amidotransferase</keyword>
<keyword id="KW-0332">GMP biosynthesis</keyword>
<keyword id="KW-0436">Ligase</keyword>
<keyword id="KW-0547">Nucleotide-binding</keyword>
<keyword id="KW-0658">Purine biosynthesis</keyword>
<comment type="function">
    <text evidence="1">Catalyzes the synthesis of GMP from XMP.</text>
</comment>
<comment type="catalytic activity">
    <reaction evidence="1">
        <text>XMP + L-glutamine + ATP + H2O = GMP + L-glutamate + AMP + diphosphate + 2 H(+)</text>
        <dbReference type="Rhea" id="RHEA:11680"/>
        <dbReference type="ChEBI" id="CHEBI:15377"/>
        <dbReference type="ChEBI" id="CHEBI:15378"/>
        <dbReference type="ChEBI" id="CHEBI:29985"/>
        <dbReference type="ChEBI" id="CHEBI:30616"/>
        <dbReference type="ChEBI" id="CHEBI:33019"/>
        <dbReference type="ChEBI" id="CHEBI:57464"/>
        <dbReference type="ChEBI" id="CHEBI:58115"/>
        <dbReference type="ChEBI" id="CHEBI:58359"/>
        <dbReference type="ChEBI" id="CHEBI:456215"/>
        <dbReference type="EC" id="6.3.5.2"/>
    </reaction>
</comment>
<comment type="pathway">
    <text evidence="1">Purine metabolism; GMP biosynthesis; GMP from XMP (L-Gln route): step 1/1.</text>
</comment>
<comment type="subunit">
    <text evidence="1">Homodimer.</text>
</comment>
<proteinExistence type="inferred from homology"/>
<reference key="1">
    <citation type="journal article" date="2008" name="Genome Res.">
        <title>Comparative genome analysis of Salmonella enteritidis PT4 and Salmonella gallinarum 287/91 provides insights into evolutionary and host adaptation pathways.</title>
        <authorList>
            <person name="Thomson N.R."/>
            <person name="Clayton D.J."/>
            <person name="Windhorst D."/>
            <person name="Vernikos G."/>
            <person name="Davidson S."/>
            <person name="Churcher C."/>
            <person name="Quail M.A."/>
            <person name="Stevens M."/>
            <person name="Jones M.A."/>
            <person name="Watson M."/>
            <person name="Barron A."/>
            <person name="Layton A."/>
            <person name="Pickard D."/>
            <person name="Kingsley R.A."/>
            <person name="Bignell A."/>
            <person name="Clark L."/>
            <person name="Harris B."/>
            <person name="Ormond D."/>
            <person name="Abdellah Z."/>
            <person name="Brooks K."/>
            <person name="Cherevach I."/>
            <person name="Chillingworth T."/>
            <person name="Woodward J."/>
            <person name="Norberczak H."/>
            <person name="Lord A."/>
            <person name="Arrowsmith C."/>
            <person name="Jagels K."/>
            <person name="Moule S."/>
            <person name="Mungall K."/>
            <person name="Saunders M."/>
            <person name="Whitehead S."/>
            <person name="Chabalgoity J.A."/>
            <person name="Maskell D."/>
            <person name="Humphreys T."/>
            <person name="Roberts M."/>
            <person name="Barrow P.A."/>
            <person name="Dougan G."/>
            <person name="Parkhill J."/>
        </authorList>
    </citation>
    <scope>NUCLEOTIDE SEQUENCE [LARGE SCALE GENOMIC DNA]</scope>
    <source>
        <strain>P125109</strain>
    </source>
</reference>
<sequence length="525" mass="58686">MTENIHKHRILILDFGSQYTQLVARRVRELGVYCELWAWDVTEAQIRDFNPSGIILSGGPESTTEENSPRAPQYVFEAGVPVFGVCYGMQTMAMQLGGHVEGSNEREFGYAQVEVLTDSALVRGIEDSLTADGKPLLDVWMSHGDKVTAIPSDFVTVASTESCPFAIMANEEKRFYGVQFHPEVTHTRQGMRMLERFVRDICQCEALWTPAKIIDDAVARIREQVGDDKVILGLSGGVDSSVTAMLLHRAIGKNLTCVFVDNGLLRLNEAEQVMDMFGDHFGLNIVHVPAEDRFLSALAGENDPEAKRKIIGRVFVEVFDEEALKLEDVKWLAQGTIYPDVIESAASATGKAHVIKSHHNVGGLPKEMKMGLVEPLKELFKDEVRKIGLELGLPYDMLYRHPFPGPGLGVRVLGEVKKEYCDLLRRADAIFIEELRKADLYDKVSQAFTVFLPVRSVGVMGDGRKYDWVVSLRAVETIDFMTAHWAHLPYDFLGRVSNRIINEVNGISRVVYDISGKPPATIEWE</sequence>
<gene>
    <name evidence="1" type="primary">guaA</name>
    <name type="ordered locus">SEN2490</name>
</gene>
<evidence type="ECO:0000255" key="1">
    <source>
        <dbReference type="HAMAP-Rule" id="MF_00344"/>
    </source>
</evidence>